<accession>Q9WUR4</accession>
<gene>
    <name type="primary">RNASE1</name>
</gene>
<reference key="1">
    <citation type="journal article" date="1999" name="Mol. Phylogenet. Evol.">
        <title>The phylogenetic position of 'Acomyinae' (Rodentia, Mammalia) as sister group of a Murinae + Gerbillinae clade: evidence from the nuclear ribonuclease gene.</title>
        <authorList>
            <person name="Dubois J.-Y.F."/>
            <person name="Catzeflis F.M."/>
            <person name="Beintema J.J."/>
        </authorList>
    </citation>
    <scope>NUCLEOTIDE SEQUENCE [GENOMIC DNA]</scope>
</reference>
<proteinExistence type="evidence at transcript level"/>
<sequence>MGLEKSLILLPLLVLVFGWVQPSLGKETSAQKFERQHMDSTGSSSSPTYCNQMMKRRNMTQGYCKPVNTFVHKPLANVQAVCSQKNVTCKNGNSNCYKSHSALPITDCRLKGNSKYPNCDYQTNQLQKHIIVACEGSPFVPVHFDASV</sequence>
<protein>
    <recommendedName>
        <fullName>Ribonuclease pancreatic</fullName>
        <ecNumber>4.6.1.18</ecNumber>
    </recommendedName>
    <alternativeName>
        <fullName>RNase 1</fullName>
    </alternativeName>
    <alternativeName>
        <fullName>RNase A</fullName>
    </alternativeName>
</protein>
<feature type="signal peptide" evidence="2">
    <location>
        <begin position="1"/>
        <end position="25"/>
    </location>
</feature>
<feature type="chain" id="PRO_0000030917" description="Ribonuclease pancreatic">
    <location>
        <begin position="26"/>
        <end position="148"/>
    </location>
</feature>
<feature type="active site" description="Proton acceptor" evidence="1">
    <location>
        <position position="37"/>
    </location>
</feature>
<feature type="active site" description="Proton donor" evidence="1">
    <location>
        <position position="143"/>
    </location>
</feature>
<feature type="binding site" evidence="1">
    <location>
        <position position="32"/>
    </location>
    <ligand>
        <name>substrate</name>
    </ligand>
</feature>
<feature type="binding site" evidence="1">
    <location>
        <position position="35"/>
    </location>
    <ligand>
        <name>substrate</name>
    </ligand>
</feature>
<feature type="binding site" evidence="1">
    <location>
        <begin position="65"/>
        <end position="69"/>
    </location>
    <ligand>
        <name>substrate</name>
    </ligand>
</feature>
<feature type="binding site" evidence="1">
    <location>
        <position position="90"/>
    </location>
    <ligand>
        <name>substrate</name>
    </ligand>
</feature>
<feature type="binding site" evidence="1">
    <location>
        <position position="109"/>
    </location>
    <ligand>
        <name>substrate</name>
    </ligand>
</feature>
<feature type="glycosylation site" description="N-linked (GlcNAc...) asparagine" evidence="2">
    <location>
        <position position="58"/>
    </location>
</feature>
<feature type="glycosylation site" description="N-linked (GlcNAc...) asparagine" evidence="2">
    <location>
        <position position="86"/>
    </location>
</feature>
<feature type="disulfide bond" evidence="1">
    <location>
        <begin position="50"/>
        <end position="108"/>
    </location>
</feature>
<feature type="disulfide bond" evidence="1">
    <location>
        <begin position="64"/>
        <end position="119"/>
    </location>
</feature>
<feature type="disulfide bond" evidence="1">
    <location>
        <begin position="82"/>
        <end position="134"/>
    </location>
</feature>
<feature type="disulfide bond" evidence="1">
    <location>
        <begin position="89"/>
        <end position="96"/>
    </location>
</feature>
<comment type="function">
    <text evidence="1">Endonuclease that catalyzes the cleavage of RNA on the 3' side of pyrimidine nucleotides. Acts on single-stranded and double-stranded RNA (By similarity).</text>
</comment>
<comment type="catalytic activity">
    <reaction>
        <text>an [RNA] containing cytidine + H2O = an [RNA]-3'-cytidine-3'-phosphate + a 5'-hydroxy-ribonucleotide-3'-[RNA].</text>
        <dbReference type="EC" id="4.6.1.18"/>
    </reaction>
</comment>
<comment type="catalytic activity">
    <reaction>
        <text>an [RNA] containing uridine + H2O = an [RNA]-3'-uridine-3'-phosphate + a 5'-hydroxy-ribonucleotide-3'-[RNA].</text>
        <dbReference type="EC" id="4.6.1.18"/>
    </reaction>
</comment>
<comment type="subunit">
    <text evidence="1">Monomer. Interacts with and forms tight 1:1 complexes with RNH1. Dimerization of two such complexes may occur. Interaction with RNH1 inhibits this protein (By similarity).</text>
</comment>
<comment type="subcellular location">
    <subcellularLocation>
        <location>Secreted</location>
    </subcellularLocation>
</comment>
<comment type="tissue specificity">
    <text>Pancreas.</text>
</comment>
<comment type="similarity">
    <text evidence="3">Belongs to the pancreatic ribonuclease family.</text>
</comment>
<dbReference type="EC" id="4.6.1.18"/>
<dbReference type="EMBL" id="AJ005769">
    <property type="protein sequence ID" value="CAB41470.1"/>
    <property type="molecule type" value="Genomic_DNA"/>
</dbReference>
<dbReference type="SMR" id="Q9WUR4"/>
<dbReference type="GlyCosmos" id="Q9WUR4">
    <property type="glycosylation" value="2 sites, No reported glycans"/>
</dbReference>
<dbReference type="GO" id="GO:0005576">
    <property type="term" value="C:extracellular region"/>
    <property type="evidence" value="ECO:0007669"/>
    <property type="project" value="UniProtKB-SubCell"/>
</dbReference>
<dbReference type="GO" id="GO:0016829">
    <property type="term" value="F:lyase activity"/>
    <property type="evidence" value="ECO:0007669"/>
    <property type="project" value="UniProtKB-KW"/>
</dbReference>
<dbReference type="GO" id="GO:0003676">
    <property type="term" value="F:nucleic acid binding"/>
    <property type="evidence" value="ECO:0007669"/>
    <property type="project" value="InterPro"/>
</dbReference>
<dbReference type="GO" id="GO:0004522">
    <property type="term" value="F:ribonuclease A activity"/>
    <property type="evidence" value="ECO:0007669"/>
    <property type="project" value="UniProtKB-EC"/>
</dbReference>
<dbReference type="GO" id="GO:0050830">
    <property type="term" value="P:defense response to Gram-positive bacterium"/>
    <property type="evidence" value="ECO:0007669"/>
    <property type="project" value="TreeGrafter"/>
</dbReference>
<dbReference type="CDD" id="cd06265">
    <property type="entry name" value="RNase_A_canonical"/>
    <property type="match status" value="1"/>
</dbReference>
<dbReference type="FunFam" id="3.10.130.10:FF:000001">
    <property type="entry name" value="Ribonuclease pancreatic"/>
    <property type="match status" value="1"/>
</dbReference>
<dbReference type="Gene3D" id="3.10.130.10">
    <property type="entry name" value="Ribonuclease A-like domain"/>
    <property type="match status" value="1"/>
</dbReference>
<dbReference type="InterPro" id="IPR001427">
    <property type="entry name" value="RNaseA"/>
</dbReference>
<dbReference type="InterPro" id="IPR036816">
    <property type="entry name" value="RNaseA-like_dom_sf"/>
</dbReference>
<dbReference type="InterPro" id="IPR023411">
    <property type="entry name" value="RNaseA_AS"/>
</dbReference>
<dbReference type="InterPro" id="IPR023412">
    <property type="entry name" value="RNaseA_domain"/>
</dbReference>
<dbReference type="PANTHER" id="PTHR11437">
    <property type="entry name" value="RIBONUCLEASE"/>
    <property type="match status" value="1"/>
</dbReference>
<dbReference type="PANTHER" id="PTHR11437:SF24">
    <property type="entry name" value="RIBONUCLEASE PANCREATIC"/>
    <property type="match status" value="1"/>
</dbReference>
<dbReference type="Pfam" id="PF00074">
    <property type="entry name" value="RnaseA"/>
    <property type="match status" value="1"/>
</dbReference>
<dbReference type="PRINTS" id="PR00794">
    <property type="entry name" value="RIBONUCLEASE"/>
</dbReference>
<dbReference type="SMART" id="SM00092">
    <property type="entry name" value="RNAse_Pc"/>
    <property type="match status" value="1"/>
</dbReference>
<dbReference type="SUPFAM" id="SSF54076">
    <property type="entry name" value="RNase A-like"/>
    <property type="match status" value="1"/>
</dbReference>
<dbReference type="PROSITE" id="PS00127">
    <property type="entry name" value="RNASE_PANCREATIC"/>
    <property type="match status" value="1"/>
</dbReference>
<organism>
    <name type="scientific">Myodes glareolus</name>
    <name type="common">Bank vole</name>
    <name type="synonym">Clethrionomys glareolus</name>
    <dbReference type="NCBI Taxonomy" id="447135"/>
    <lineage>
        <taxon>Eukaryota</taxon>
        <taxon>Metazoa</taxon>
        <taxon>Chordata</taxon>
        <taxon>Craniata</taxon>
        <taxon>Vertebrata</taxon>
        <taxon>Euteleostomi</taxon>
        <taxon>Mammalia</taxon>
        <taxon>Eutheria</taxon>
        <taxon>Euarchontoglires</taxon>
        <taxon>Glires</taxon>
        <taxon>Rodentia</taxon>
        <taxon>Myomorpha</taxon>
        <taxon>Muroidea</taxon>
        <taxon>Cricetidae</taxon>
        <taxon>Arvicolinae</taxon>
        <taxon>Myodes</taxon>
    </lineage>
</organism>
<name>RNAS1_MYOGA</name>
<keyword id="KW-1015">Disulfide bond</keyword>
<keyword id="KW-0255">Endonuclease</keyword>
<keyword id="KW-0325">Glycoprotein</keyword>
<keyword id="KW-0378">Hydrolase</keyword>
<keyword id="KW-0456">Lyase</keyword>
<keyword id="KW-0540">Nuclease</keyword>
<keyword id="KW-0964">Secreted</keyword>
<keyword id="KW-0732">Signal</keyword>
<evidence type="ECO:0000250" key="1"/>
<evidence type="ECO:0000255" key="2"/>
<evidence type="ECO:0000305" key="3"/>